<name>COXX_CORGL</name>
<comment type="function">
    <text evidence="1">Converts heme B (protoheme IX) to heme O by substitution of the vinyl group on carbon 2 of heme B porphyrin ring with a hydroxyethyl farnesyl side group.</text>
</comment>
<comment type="catalytic activity">
    <reaction evidence="1">
        <text>heme b + (2E,6E)-farnesyl diphosphate + H2O = Fe(II)-heme o + diphosphate</text>
        <dbReference type="Rhea" id="RHEA:28070"/>
        <dbReference type="ChEBI" id="CHEBI:15377"/>
        <dbReference type="ChEBI" id="CHEBI:33019"/>
        <dbReference type="ChEBI" id="CHEBI:60344"/>
        <dbReference type="ChEBI" id="CHEBI:60530"/>
        <dbReference type="ChEBI" id="CHEBI:175763"/>
        <dbReference type="EC" id="2.5.1.141"/>
    </reaction>
</comment>
<comment type="pathway">
    <text evidence="1">Porphyrin-containing compound metabolism; heme O biosynthesis; heme O from protoheme: step 1/1.</text>
</comment>
<comment type="subcellular location">
    <subcellularLocation>
        <location evidence="1">Cell membrane</location>
        <topology evidence="1">Multi-pass membrane protein</topology>
    </subcellularLocation>
</comment>
<comment type="miscellaneous">
    <text evidence="1">Carbon 2 of the heme B porphyrin ring is defined according to the Fischer nomenclature.</text>
</comment>
<comment type="similarity">
    <text evidence="1">Belongs to the UbiA prenyltransferase family. Protoheme IX farnesyltransferase subfamily.</text>
</comment>
<feature type="chain" id="PRO_0000327042" description="Protoheme IX farnesyltransferase">
    <location>
        <begin position="1"/>
        <end position="323"/>
    </location>
</feature>
<feature type="transmembrane region" description="Helical" evidence="1">
    <location>
        <begin position="50"/>
        <end position="70"/>
    </location>
</feature>
<feature type="transmembrane region" description="Helical" evidence="1">
    <location>
        <begin position="97"/>
        <end position="117"/>
    </location>
</feature>
<feature type="transmembrane region" description="Helical" evidence="1">
    <location>
        <begin position="118"/>
        <end position="138"/>
    </location>
</feature>
<feature type="transmembrane region" description="Helical" evidence="1">
    <location>
        <begin position="150"/>
        <end position="170"/>
    </location>
</feature>
<feature type="transmembrane region" description="Helical" evidence="1">
    <location>
        <begin position="184"/>
        <end position="204"/>
    </location>
</feature>
<feature type="transmembrane region" description="Helical" evidence="1">
    <location>
        <begin position="231"/>
        <end position="248"/>
    </location>
</feature>
<feature type="transmembrane region" description="Helical" evidence="1">
    <location>
        <begin position="252"/>
        <end position="274"/>
    </location>
</feature>
<feature type="transmembrane region" description="Helical" evidence="1">
    <location>
        <begin position="293"/>
        <end position="313"/>
    </location>
</feature>
<organism>
    <name type="scientific">Corynebacterium glutamicum (strain ATCC 13032 / DSM 20300 / JCM 1318 / BCRC 11384 / CCUG 27702 / LMG 3730 / NBRC 12168 / NCIMB 10025 / NRRL B-2784 / 534)</name>
    <dbReference type="NCBI Taxonomy" id="196627"/>
    <lineage>
        <taxon>Bacteria</taxon>
        <taxon>Bacillati</taxon>
        <taxon>Actinomycetota</taxon>
        <taxon>Actinomycetes</taxon>
        <taxon>Mycobacteriales</taxon>
        <taxon>Corynebacteriaceae</taxon>
        <taxon>Corynebacterium</taxon>
    </lineage>
</organism>
<sequence>MSDLKMQRSGGEPLDTIKAYIALTKPRVIELLLVATIPTMLQAERGENNIVLILLTVFGGWMGAAAANTFNMVADSDIDQRMGRTRARPLVRHTVSNRDASIFAWVLTVASFLWLWLLCDSMLAGIFVLITIFFYIFVYTKWLKRRTHMNIVWGGAAGCMPVLVGWAVIVDQFEPGVPQQWWQAIVLFMVIFFWTPPHTWALAMKYREDYKAAGVPMLPVVRTPVQVTAQIVWYSVATVLTTFLLIPATGWIYAAIAVISGVTFLFMAIKLHLGIKNGGKVKPLKLFILSNNYLAVLFVALSVDAVLGLETIGEMLGWTTTFF</sequence>
<gene>
    <name evidence="1" type="primary">ctaB</name>
    <name type="ordered locus">Cgl1573</name>
    <name type="ordered locus">cg1773</name>
</gene>
<keyword id="KW-1003">Cell membrane</keyword>
<keyword id="KW-0350">Heme biosynthesis</keyword>
<keyword id="KW-0472">Membrane</keyword>
<keyword id="KW-1185">Reference proteome</keyword>
<keyword id="KW-0808">Transferase</keyword>
<keyword id="KW-0812">Transmembrane</keyword>
<keyword id="KW-1133">Transmembrane helix</keyword>
<reference key="1">
    <citation type="journal article" date="2003" name="Appl. Microbiol. Biotechnol.">
        <title>The Corynebacterium glutamicum genome: features and impacts on biotechnological processes.</title>
        <authorList>
            <person name="Ikeda M."/>
            <person name="Nakagawa S."/>
        </authorList>
    </citation>
    <scope>NUCLEOTIDE SEQUENCE [LARGE SCALE GENOMIC DNA]</scope>
    <source>
        <strain>ATCC 13032 / DSM 20300 / JCM 1318 / BCRC 11384 / CCUG 27702 / LMG 3730 / NBRC 12168 / NCIMB 10025 / NRRL B-2784 / 534</strain>
    </source>
</reference>
<reference key="2">
    <citation type="journal article" date="2003" name="J. Biotechnol.">
        <title>The complete Corynebacterium glutamicum ATCC 13032 genome sequence and its impact on the production of L-aspartate-derived amino acids and vitamins.</title>
        <authorList>
            <person name="Kalinowski J."/>
            <person name="Bathe B."/>
            <person name="Bartels D."/>
            <person name="Bischoff N."/>
            <person name="Bott M."/>
            <person name="Burkovski A."/>
            <person name="Dusch N."/>
            <person name="Eggeling L."/>
            <person name="Eikmanns B.J."/>
            <person name="Gaigalat L."/>
            <person name="Goesmann A."/>
            <person name="Hartmann M."/>
            <person name="Huthmacher K."/>
            <person name="Kraemer R."/>
            <person name="Linke B."/>
            <person name="McHardy A.C."/>
            <person name="Meyer F."/>
            <person name="Moeckel B."/>
            <person name="Pfefferle W."/>
            <person name="Puehler A."/>
            <person name="Rey D.A."/>
            <person name="Rueckert C."/>
            <person name="Rupp O."/>
            <person name="Sahm H."/>
            <person name="Wendisch V.F."/>
            <person name="Wiegraebe I."/>
            <person name="Tauch A."/>
        </authorList>
    </citation>
    <scope>NUCLEOTIDE SEQUENCE [LARGE SCALE GENOMIC DNA]</scope>
    <source>
        <strain>ATCC 13032 / DSM 20300 / JCM 1318 / BCRC 11384 / CCUG 27702 / LMG 3730 / NBRC 12168 / NCIMB 10025 / NRRL B-2784 / 534</strain>
    </source>
</reference>
<dbReference type="EC" id="2.5.1.141" evidence="1"/>
<dbReference type="EMBL" id="BA000036">
    <property type="protein sequence ID" value="BAB98966.1"/>
    <property type="molecule type" value="Genomic_DNA"/>
</dbReference>
<dbReference type="EMBL" id="BX927152">
    <property type="protein sequence ID" value="CAF21581.1"/>
    <property type="molecule type" value="Genomic_DNA"/>
</dbReference>
<dbReference type="RefSeq" id="NP_600787.1">
    <property type="nucleotide sequence ID" value="NC_003450.3"/>
</dbReference>
<dbReference type="SMR" id="Q8NQ66"/>
<dbReference type="STRING" id="196627.cg1773"/>
<dbReference type="KEGG" id="cgb:cg1773"/>
<dbReference type="KEGG" id="cgl:Cgl1573"/>
<dbReference type="PATRIC" id="fig|196627.13.peg.1534"/>
<dbReference type="eggNOG" id="COG0109">
    <property type="taxonomic scope" value="Bacteria"/>
</dbReference>
<dbReference type="HOGENOM" id="CLU_029631_0_1_11"/>
<dbReference type="OrthoDB" id="9814417at2"/>
<dbReference type="BioCyc" id="CORYNE:G18NG-11158-MONOMER"/>
<dbReference type="UniPathway" id="UPA00834">
    <property type="reaction ID" value="UER00712"/>
</dbReference>
<dbReference type="Proteomes" id="UP000000582">
    <property type="component" value="Chromosome"/>
</dbReference>
<dbReference type="Proteomes" id="UP000001009">
    <property type="component" value="Chromosome"/>
</dbReference>
<dbReference type="GO" id="GO:0005886">
    <property type="term" value="C:plasma membrane"/>
    <property type="evidence" value="ECO:0007669"/>
    <property type="project" value="UniProtKB-SubCell"/>
</dbReference>
<dbReference type="GO" id="GO:0008495">
    <property type="term" value="F:protoheme IX farnesyltransferase activity"/>
    <property type="evidence" value="ECO:0007669"/>
    <property type="project" value="UniProtKB-UniRule"/>
</dbReference>
<dbReference type="GO" id="GO:0048034">
    <property type="term" value="P:heme O biosynthetic process"/>
    <property type="evidence" value="ECO:0007669"/>
    <property type="project" value="UniProtKB-UniRule"/>
</dbReference>
<dbReference type="CDD" id="cd13957">
    <property type="entry name" value="PT_UbiA_Cox10"/>
    <property type="match status" value="1"/>
</dbReference>
<dbReference type="Gene3D" id="1.10.357.140">
    <property type="entry name" value="UbiA prenyltransferase"/>
    <property type="match status" value="1"/>
</dbReference>
<dbReference type="HAMAP" id="MF_00154">
    <property type="entry name" value="CyoE_CtaB"/>
    <property type="match status" value="1"/>
</dbReference>
<dbReference type="InterPro" id="IPR006369">
    <property type="entry name" value="Protohaem_IX_farnesylTrfase"/>
</dbReference>
<dbReference type="InterPro" id="IPR000537">
    <property type="entry name" value="UbiA_prenyltransferase"/>
</dbReference>
<dbReference type="InterPro" id="IPR044878">
    <property type="entry name" value="UbiA_sf"/>
</dbReference>
<dbReference type="NCBIfam" id="TIGR01473">
    <property type="entry name" value="cyoE_ctaB"/>
    <property type="match status" value="1"/>
</dbReference>
<dbReference type="NCBIfam" id="NF003349">
    <property type="entry name" value="PRK04375.1-2"/>
    <property type="match status" value="1"/>
</dbReference>
<dbReference type="PANTHER" id="PTHR43448:SF7">
    <property type="entry name" value="4-HYDROXYBENZOATE SOLANESYLTRANSFERASE"/>
    <property type="match status" value="1"/>
</dbReference>
<dbReference type="PANTHER" id="PTHR43448">
    <property type="entry name" value="PROTOHEME IX FARNESYLTRANSFERASE, MITOCHONDRIAL"/>
    <property type="match status" value="1"/>
</dbReference>
<dbReference type="Pfam" id="PF01040">
    <property type="entry name" value="UbiA"/>
    <property type="match status" value="1"/>
</dbReference>
<evidence type="ECO:0000255" key="1">
    <source>
        <dbReference type="HAMAP-Rule" id="MF_00154"/>
    </source>
</evidence>
<protein>
    <recommendedName>
        <fullName evidence="1">Protoheme IX farnesyltransferase</fullName>
        <ecNumber evidence="1">2.5.1.141</ecNumber>
    </recommendedName>
    <alternativeName>
        <fullName evidence="1">Heme B farnesyltransferase</fullName>
    </alternativeName>
    <alternativeName>
        <fullName evidence="1">Heme O synthase</fullName>
    </alternativeName>
</protein>
<proteinExistence type="inferred from homology"/>
<accession>Q8NQ66</accession>
<accession>Q6M520</accession>